<accession>B7VHK6</accession>
<dbReference type="EC" id="3.2.2.23" evidence="2"/>
<dbReference type="EC" id="4.2.99.18" evidence="2"/>
<dbReference type="EMBL" id="FM954972">
    <property type="protein sequence ID" value="CAV17218.1"/>
    <property type="molecule type" value="Genomic_DNA"/>
</dbReference>
<dbReference type="SMR" id="B7VHK6"/>
<dbReference type="STRING" id="575788.VS_0186"/>
<dbReference type="KEGG" id="vsp:VS_0186"/>
<dbReference type="PATRIC" id="fig|575788.5.peg.1574"/>
<dbReference type="eggNOG" id="COG0266">
    <property type="taxonomic scope" value="Bacteria"/>
</dbReference>
<dbReference type="HOGENOM" id="CLU_038423_1_1_6"/>
<dbReference type="Proteomes" id="UP000009100">
    <property type="component" value="Chromosome 1"/>
</dbReference>
<dbReference type="GO" id="GO:0034039">
    <property type="term" value="F:8-oxo-7,8-dihydroguanine DNA N-glycosylase activity"/>
    <property type="evidence" value="ECO:0007669"/>
    <property type="project" value="TreeGrafter"/>
</dbReference>
<dbReference type="GO" id="GO:0140078">
    <property type="term" value="F:class I DNA-(apurinic or apyrimidinic site) endonuclease activity"/>
    <property type="evidence" value="ECO:0007669"/>
    <property type="project" value="UniProtKB-EC"/>
</dbReference>
<dbReference type="GO" id="GO:0003684">
    <property type="term" value="F:damaged DNA binding"/>
    <property type="evidence" value="ECO:0007669"/>
    <property type="project" value="InterPro"/>
</dbReference>
<dbReference type="GO" id="GO:0008270">
    <property type="term" value="F:zinc ion binding"/>
    <property type="evidence" value="ECO:0007669"/>
    <property type="project" value="UniProtKB-UniRule"/>
</dbReference>
<dbReference type="GO" id="GO:0006284">
    <property type="term" value="P:base-excision repair"/>
    <property type="evidence" value="ECO:0007669"/>
    <property type="project" value="InterPro"/>
</dbReference>
<dbReference type="CDD" id="cd08966">
    <property type="entry name" value="EcFpg-like_N"/>
    <property type="match status" value="1"/>
</dbReference>
<dbReference type="FunFam" id="1.10.8.50:FF:000003">
    <property type="entry name" value="Formamidopyrimidine-DNA glycosylase"/>
    <property type="match status" value="1"/>
</dbReference>
<dbReference type="FunFam" id="3.20.190.10:FF:000001">
    <property type="entry name" value="Formamidopyrimidine-DNA glycosylase"/>
    <property type="match status" value="1"/>
</dbReference>
<dbReference type="Gene3D" id="1.10.8.50">
    <property type="match status" value="1"/>
</dbReference>
<dbReference type="Gene3D" id="3.20.190.10">
    <property type="entry name" value="MutM-like, N-terminal"/>
    <property type="match status" value="1"/>
</dbReference>
<dbReference type="HAMAP" id="MF_00103">
    <property type="entry name" value="Fapy_DNA_glycosyl"/>
    <property type="match status" value="1"/>
</dbReference>
<dbReference type="InterPro" id="IPR015886">
    <property type="entry name" value="DNA_glyclase/AP_lyase_DNA-bd"/>
</dbReference>
<dbReference type="InterPro" id="IPR015887">
    <property type="entry name" value="DNA_glyclase_Znf_dom_DNA_BS"/>
</dbReference>
<dbReference type="InterPro" id="IPR020629">
    <property type="entry name" value="Formamido-pyr_DNA_Glyclase"/>
</dbReference>
<dbReference type="InterPro" id="IPR012319">
    <property type="entry name" value="FPG_cat"/>
</dbReference>
<dbReference type="InterPro" id="IPR035937">
    <property type="entry name" value="MutM-like_N-ter"/>
</dbReference>
<dbReference type="InterPro" id="IPR010979">
    <property type="entry name" value="Ribosomal_uS13-like_H2TH"/>
</dbReference>
<dbReference type="InterPro" id="IPR000214">
    <property type="entry name" value="Znf_DNA_glyclase/AP_lyase"/>
</dbReference>
<dbReference type="InterPro" id="IPR010663">
    <property type="entry name" value="Znf_FPG/IleRS"/>
</dbReference>
<dbReference type="NCBIfam" id="TIGR00577">
    <property type="entry name" value="fpg"/>
    <property type="match status" value="1"/>
</dbReference>
<dbReference type="NCBIfam" id="NF002211">
    <property type="entry name" value="PRK01103.1"/>
    <property type="match status" value="1"/>
</dbReference>
<dbReference type="PANTHER" id="PTHR22993">
    <property type="entry name" value="FORMAMIDOPYRIMIDINE-DNA GLYCOSYLASE"/>
    <property type="match status" value="1"/>
</dbReference>
<dbReference type="PANTHER" id="PTHR22993:SF9">
    <property type="entry name" value="FORMAMIDOPYRIMIDINE-DNA GLYCOSYLASE"/>
    <property type="match status" value="1"/>
</dbReference>
<dbReference type="Pfam" id="PF01149">
    <property type="entry name" value="Fapy_DNA_glyco"/>
    <property type="match status" value="1"/>
</dbReference>
<dbReference type="Pfam" id="PF06831">
    <property type="entry name" value="H2TH"/>
    <property type="match status" value="1"/>
</dbReference>
<dbReference type="Pfam" id="PF06827">
    <property type="entry name" value="zf-FPG_IleRS"/>
    <property type="match status" value="1"/>
</dbReference>
<dbReference type="SMART" id="SM00898">
    <property type="entry name" value="Fapy_DNA_glyco"/>
    <property type="match status" value="1"/>
</dbReference>
<dbReference type="SMART" id="SM01232">
    <property type="entry name" value="H2TH"/>
    <property type="match status" value="1"/>
</dbReference>
<dbReference type="SUPFAM" id="SSF57716">
    <property type="entry name" value="Glucocorticoid receptor-like (DNA-binding domain)"/>
    <property type="match status" value="1"/>
</dbReference>
<dbReference type="SUPFAM" id="SSF81624">
    <property type="entry name" value="N-terminal domain of MutM-like DNA repair proteins"/>
    <property type="match status" value="1"/>
</dbReference>
<dbReference type="SUPFAM" id="SSF46946">
    <property type="entry name" value="S13-like H2TH domain"/>
    <property type="match status" value="1"/>
</dbReference>
<dbReference type="PROSITE" id="PS51068">
    <property type="entry name" value="FPG_CAT"/>
    <property type="match status" value="1"/>
</dbReference>
<dbReference type="PROSITE" id="PS01242">
    <property type="entry name" value="ZF_FPG_1"/>
    <property type="match status" value="1"/>
</dbReference>
<dbReference type="PROSITE" id="PS51066">
    <property type="entry name" value="ZF_FPG_2"/>
    <property type="match status" value="1"/>
</dbReference>
<protein>
    <recommendedName>
        <fullName evidence="2">Formamidopyrimidine-DNA glycosylase</fullName>
        <shortName evidence="2">Fapy-DNA glycosylase</shortName>
        <ecNumber evidence="2">3.2.2.23</ecNumber>
    </recommendedName>
    <alternativeName>
        <fullName evidence="2">DNA-(apurinic or apyrimidinic site) lyase MutM</fullName>
        <shortName evidence="2">AP lyase MutM</shortName>
        <ecNumber evidence="2">4.2.99.18</ecNumber>
    </alternativeName>
</protein>
<proteinExistence type="inferred from homology"/>
<evidence type="ECO:0000250" key="1"/>
<evidence type="ECO:0000255" key="2">
    <source>
        <dbReference type="HAMAP-Rule" id="MF_00103"/>
    </source>
</evidence>
<organism>
    <name type="scientific">Vibrio atlanticus (strain LGP32)</name>
    <name type="common">Vibrio splendidus (strain Mel32)</name>
    <dbReference type="NCBI Taxonomy" id="575788"/>
    <lineage>
        <taxon>Bacteria</taxon>
        <taxon>Pseudomonadati</taxon>
        <taxon>Pseudomonadota</taxon>
        <taxon>Gammaproteobacteria</taxon>
        <taxon>Vibrionales</taxon>
        <taxon>Vibrionaceae</taxon>
        <taxon>Vibrio</taxon>
    </lineage>
</organism>
<keyword id="KW-0227">DNA damage</keyword>
<keyword id="KW-0234">DNA repair</keyword>
<keyword id="KW-0238">DNA-binding</keyword>
<keyword id="KW-0326">Glycosidase</keyword>
<keyword id="KW-0378">Hydrolase</keyword>
<keyword id="KW-0456">Lyase</keyword>
<keyword id="KW-0479">Metal-binding</keyword>
<keyword id="KW-0511">Multifunctional enzyme</keyword>
<keyword id="KW-0862">Zinc</keyword>
<keyword id="KW-0863">Zinc-finger</keyword>
<name>FPG_VIBA3</name>
<comment type="function">
    <text evidence="2">Involved in base excision repair of DNA damaged by oxidation or by mutagenic agents. Acts as a DNA glycosylase that recognizes and removes damaged bases. Has a preference for oxidized purines, such as 7,8-dihydro-8-oxoguanine (8-oxoG). Has AP (apurinic/apyrimidinic) lyase activity and introduces nicks in the DNA strand. Cleaves the DNA backbone by beta-delta elimination to generate a single-strand break at the site of the removed base with both 3'- and 5'-phosphates.</text>
</comment>
<comment type="catalytic activity">
    <reaction evidence="2">
        <text>Hydrolysis of DNA containing ring-opened 7-methylguanine residues, releasing 2,6-diamino-4-hydroxy-5-(N-methyl)formamidopyrimidine.</text>
        <dbReference type="EC" id="3.2.2.23"/>
    </reaction>
</comment>
<comment type="catalytic activity">
    <reaction evidence="2">
        <text>2'-deoxyribonucleotide-(2'-deoxyribose 5'-phosphate)-2'-deoxyribonucleotide-DNA = a 3'-end 2'-deoxyribonucleotide-(2,3-dehydro-2,3-deoxyribose 5'-phosphate)-DNA + a 5'-end 5'-phospho-2'-deoxyribonucleoside-DNA + H(+)</text>
        <dbReference type="Rhea" id="RHEA:66592"/>
        <dbReference type="Rhea" id="RHEA-COMP:13180"/>
        <dbReference type="Rhea" id="RHEA-COMP:16897"/>
        <dbReference type="Rhea" id="RHEA-COMP:17067"/>
        <dbReference type="ChEBI" id="CHEBI:15378"/>
        <dbReference type="ChEBI" id="CHEBI:136412"/>
        <dbReference type="ChEBI" id="CHEBI:157695"/>
        <dbReference type="ChEBI" id="CHEBI:167181"/>
        <dbReference type="EC" id="4.2.99.18"/>
    </reaction>
</comment>
<comment type="cofactor">
    <cofactor evidence="2">
        <name>Zn(2+)</name>
        <dbReference type="ChEBI" id="CHEBI:29105"/>
    </cofactor>
    <text evidence="2">Binds 1 zinc ion per subunit.</text>
</comment>
<comment type="subunit">
    <text evidence="2">Monomer.</text>
</comment>
<comment type="similarity">
    <text evidence="2">Belongs to the FPG family.</text>
</comment>
<reference key="1">
    <citation type="submission" date="2009-02" db="EMBL/GenBank/DDBJ databases">
        <title>Vibrio splendidus str. LGP32 complete genome.</title>
        <authorList>
            <person name="Mazel D."/>
            <person name="Le Roux F."/>
        </authorList>
    </citation>
    <scope>NUCLEOTIDE SEQUENCE [LARGE SCALE GENOMIC DNA]</scope>
    <source>
        <strain>LGP32</strain>
    </source>
</reference>
<gene>
    <name evidence="2" type="primary">mutM</name>
    <name evidence="2" type="synonym">fpg</name>
    <name type="ordered locus">VS_0186</name>
</gene>
<feature type="initiator methionine" description="Removed" evidence="1">
    <location>
        <position position="1"/>
    </location>
</feature>
<feature type="chain" id="PRO_1000118906" description="Formamidopyrimidine-DNA glycosylase">
    <location>
        <begin position="2"/>
        <end position="269"/>
    </location>
</feature>
<feature type="zinc finger region" description="FPG-type" evidence="2">
    <location>
        <begin position="235"/>
        <end position="269"/>
    </location>
</feature>
<feature type="active site" description="Schiff-base intermediate with DNA" evidence="2">
    <location>
        <position position="2"/>
    </location>
</feature>
<feature type="active site" description="Proton donor" evidence="2">
    <location>
        <position position="3"/>
    </location>
</feature>
<feature type="active site" description="Proton donor; for beta-elimination activity" evidence="2">
    <location>
        <position position="57"/>
    </location>
</feature>
<feature type="active site" description="Proton donor; for delta-elimination activity" evidence="2">
    <location>
        <position position="259"/>
    </location>
</feature>
<feature type="binding site" evidence="2">
    <location>
        <position position="90"/>
    </location>
    <ligand>
        <name>DNA</name>
        <dbReference type="ChEBI" id="CHEBI:16991"/>
    </ligand>
</feature>
<feature type="binding site" evidence="2">
    <location>
        <position position="109"/>
    </location>
    <ligand>
        <name>DNA</name>
        <dbReference type="ChEBI" id="CHEBI:16991"/>
    </ligand>
</feature>
<feature type="binding site" evidence="2">
    <location>
        <position position="150"/>
    </location>
    <ligand>
        <name>DNA</name>
        <dbReference type="ChEBI" id="CHEBI:16991"/>
    </ligand>
</feature>
<sequence length="269" mass="30122">MPELPEVEVSRMGISPHLVGETIKTLTFRTPKLRWDIPQELKRLEGQVIRSISRRAKYLLIETDTGTAIVHLGMSGSLRVLDADFPPAKHDHVDLKLTNGKILRYNDPRRFGAWLWSAPDEIHTVLLGSGPEPLTDDFNADYIAEKAEKRKVAVKQFIMDNKVVVGVGNIYANEALFSSRINPLRSASKVTKQEWLLLTKEIKQVLATAIRQGGTTLKDFAQADGKPGYFAQELQVYGKAGEQCPNCAELIQELKIGQRNTFYCSSCQV</sequence>